<comment type="similarity">
    <text evidence="1">Belongs to the asfivirus DP63R family.</text>
</comment>
<gene>
    <name type="ordered locus">War-159</name>
</gene>
<name>VF63R_ASFWA</name>
<feature type="chain" id="PRO_0000373714" description="Uncharacterized protein DP63R">
    <location>
        <begin position="1"/>
        <end position="73"/>
    </location>
</feature>
<accession>P0CAJ0</accession>
<evidence type="ECO:0000305" key="1"/>
<organismHost>
    <name type="scientific">Ornithodoros</name>
    <name type="common">relapsing fever ticks</name>
    <dbReference type="NCBI Taxonomy" id="6937"/>
</organismHost>
<organismHost>
    <name type="scientific">Phacochoerus aethiopicus</name>
    <name type="common">Warthog</name>
    <dbReference type="NCBI Taxonomy" id="85517"/>
</organismHost>
<organismHost>
    <name type="scientific">Phacochoerus africanus</name>
    <name type="common">Warthog</name>
    <dbReference type="NCBI Taxonomy" id="41426"/>
</organismHost>
<organismHost>
    <name type="scientific">Potamochoerus larvatus</name>
    <name type="common">Bushpig</name>
    <dbReference type="NCBI Taxonomy" id="273792"/>
</organismHost>
<organismHost>
    <name type="scientific">Sus scrofa</name>
    <name type="common">Pig</name>
    <dbReference type="NCBI Taxonomy" id="9823"/>
</organismHost>
<sequence>MWFCIDLGADAFKEAGVLAEKKNRRVLQHILGLNIFKRELIPPCKDPDPYQIQILLKNYILKNVSTVFTYYCQ</sequence>
<organism>
    <name type="scientific">African swine fever virus (isolate Warthog/Namibia/Wart80/1980)</name>
    <name type="common">ASFV</name>
    <dbReference type="NCBI Taxonomy" id="561444"/>
    <lineage>
        <taxon>Viruses</taxon>
        <taxon>Varidnaviria</taxon>
        <taxon>Bamfordvirae</taxon>
        <taxon>Nucleocytoviricota</taxon>
        <taxon>Pokkesviricetes</taxon>
        <taxon>Asfuvirales</taxon>
        <taxon>Asfarviridae</taxon>
        <taxon>Asfivirus</taxon>
        <taxon>African swine fever virus</taxon>
    </lineage>
</organism>
<dbReference type="EMBL" id="AY261366">
    <property type="status" value="NOT_ANNOTATED_CDS"/>
    <property type="molecule type" value="Genomic_DNA"/>
</dbReference>
<dbReference type="Proteomes" id="UP000000858">
    <property type="component" value="Segment"/>
</dbReference>
<dbReference type="GO" id="GO:0042330">
    <property type="term" value="P:taxis"/>
    <property type="evidence" value="ECO:0007669"/>
    <property type="project" value="InterPro"/>
</dbReference>
<dbReference type="InterPro" id="IPR002595">
    <property type="entry name" value="ASFV_MGF360"/>
</dbReference>
<dbReference type="Pfam" id="PF01671">
    <property type="entry name" value="ASFV_360"/>
    <property type="match status" value="1"/>
</dbReference>
<protein>
    <recommendedName>
        <fullName>Uncharacterized protein DP63R</fullName>
    </recommendedName>
</protein>
<proteinExistence type="inferred from homology"/>
<reference key="1">
    <citation type="submission" date="2003-03" db="EMBL/GenBank/DDBJ databases">
        <title>African swine fever virus genomes.</title>
        <authorList>
            <person name="Kutish G.F."/>
            <person name="Rock D.L."/>
        </authorList>
    </citation>
    <scope>NUCLEOTIDE SEQUENCE [LARGE SCALE GENOMIC DNA]</scope>
</reference>